<organism>
    <name type="scientific">Streptococcus pneumoniae serotype 19F (strain G54)</name>
    <dbReference type="NCBI Taxonomy" id="512566"/>
    <lineage>
        <taxon>Bacteria</taxon>
        <taxon>Bacillati</taxon>
        <taxon>Bacillota</taxon>
        <taxon>Bacilli</taxon>
        <taxon>Lactobacillales</taxon>
        <taxon>Streptococcaceae</taxon>
        <taxon>Streptococcus</taxon>
    </lineage>
</organism>
<dbReference type="EMBL" id="CP001015">
    <property type="protein sequence ID" value="ACF55845.1"/>
    <property type="molecule type" value="Genomic_DNA"/>
</dbReference>
<dbReference type="SMR" id="B5E6L2"/>
<dbReference type="KEGG" id="spx:SPG_1495"/>
<dbReference type="HOGENOM" id="CLU_014218_8_2_9"/>
<dbReference type="GO" id="GO:0009376">
    <property type="term" value="C:HslUV protease complex"/>
    <property type="evidence" value="ECO:0007669"/>
    <property type="project" value="TreeGrafter"/>
</dbReference>
<dbReference type="GO" id="GO:0005524">
    <property type="term" value="F:ATP binding"/>
    <property type="evidence" value="ECO:0007669"/>
    <property type="project" value="UniProtKB-UniRule"/>
</dbReference>
<dbReference type="GO" id="GO:0016887">
    <property type="term" value="F:ATP hydrolysis activity"/>
    <property type="evidence" value="ECO:0007669"/>
    <property type="project" value="InterPro"/>
</dbReference>
<dbReference type="GO" id="GO:0140662">
    <property type="term" value="F:ATP-dependent protein folding chaperone"/>
    <property type="evidence" value="ECO:0007669"/>
    <property type="project" value="InterPro"/>
</dbReference>
<dbReference type="GO" id="GO:0046983">
    <property type="term" value="F:protein dimerization activity"/>
    <property type="evidence" value="ECO:0007669"/>
    <property type="project" value="InterPro"/>
</dbReference>
<dbReference type="GO" id="GO:0051082">
    <property type="term" value="F:unfolded protein binding"/>
    <property type="evidence" value="ECO:0007669"/>
    <property type="project" value="UniProtKB-UniRule"/>
</dbReference>
<dbReference type="GO" id="GO:0008270">
    <property type="term" value="F:zinc ion binding"/>
    <property type="evidence" value="ECO:0007669"/>
    <property type="project" value="InterPro"/>
</dbReference>
<dbReference type="GO" id="GO:0051301">
    <property type="term" value="P:cell division"/>
    <property type="evidence" value="ECO:0007669"/>
    <property type="project" value="TreeGrafter"/>
</dbReference>
<dbReference type="GO" id="GO:0051603">
    <property type="term" value="P:proteolysis involved in protein catabolic process"/>
    <property type="evidence" value="ECO:0007669"/>
    <property type="project" value="TreeGrafter"/>
</dbReference>
<dbReference type="CDD" id="cd19497">
    <property type="entry name" value="RecA-like_ClpX"/>
    <property type="match status" value="1"/>
</dbReference>
<dbReference type="FunFam" id="1.10.8.60:FF:000002">
    <property type="entry name" value="ATP-dependent Clp protease ATP-binding subunit ClpX"/>
    <property type="match status" value="1"/>
</dbReference>
<dbReference type="FunFam" id="3.40.50.300:FF:000005">
    <property type="entry name" value="ATP-dependent Clp protease ATP-binding subunit ClpX"/>
    <property type="match status" value="1"/>
</dbReference>
<dbReference type="Gene3D" id="1.10.8.60">
    <property type="match status" value="1"/>
</dbReference>
<dbReference type="Gene3D" id="6.20.220.10">
    <property type="entry name" value="ClpX chaperone, C4-type zinc finger domain"/>
    <property type="match status" value="1"/>
</dbReference>
<dbReference type="Gene3D" id="3.40.50.300">
    <property type="entry name" value="P-loop containing nucleotide triphosphate hydrolases"/>
    <property type="match status" value="1"/>
</dbReference>
<dbReference type="HAMAP" id="MF_00175">
    <property type="entry name" value="ClpX"/>
    <property type="match status" value="1"/>
</dbReference>
<dbReference type="InterPro" id="IPR003593">
    <property type="entry name" value="AAA+_ATPase"/>
</dbReference>
<dbReference type="InterPro" id="IPR050052">
    <property type="entry name" value="ATP-dep_Clp_protease_ClpX"/>
</dbReference>
<dbReference type="InterPro" id="IPR003959">
    <property type="entry name" value="ATPase_AAA_core"/>
</dbReference>
<dbReference type="InterPro" id="IPR019489">
    <property type="entry name" value="Clp_ATPase_C"/>
</dbReference>
<dbReference type="InterPro" id="IPR004487">
    <property type="entry name" value="Clp_protease_ATP-bd_su_ClpX"/>
</dbReference>
<dbReference type="InterPro" id="IPR046425">
    <property type="entry name" value="ClpX_bact"/>
</dbReference>
<dbReference type="InterPro" id="IPR027417">
    <property type="entry name" value="P-loop_NTPase"/>
</dbReference>
<dbReference type="InterPro" id="IPR010603">
    <property type="entry name" value="Znf_CppX_C4"/>
</dbReference>
<dbReference type="InterPro" id="IPR038366">
    <property type="entry name" value="Znf_CppX_C4_sf"/>
</dbReference>
<dbReference type="NCBIfam" id="TIGR00382">
    <property type="entry name" value="clpX"/>
    <property type="match status" value="1"/>
</dbReference>
<dbReference type="NCBIfam" id="NF003745">
    <property type="entry name" value="PRK05342.1"/>
    <property type="match status" value="1"/>
</dbReference>
<dbReference type="PANTHER" id="PTHR48102:SF7">
    <property type="entry name" value="ATP-DEPENDENT CLP PROTEASE ATP-BINDING SUBUNIT CLPX-LIKE, MITOCHONDRIAL"/>
    <property type="match status" value="1"/>
</dbReference>
<dbReference type="PANTHER" id="PTHR48102">
    <property type="entry name" value="ATP-DEPENDENT CLP PROTEASE ATP-BINDING SUBUNIT CLPX-LIKE, MITOCHONDRIAL-RELATED"/>
    <property type="match status" value="1"/>
</dbReference>
<dbReference type="Pfam" id="PF07724">
    <property type="entry name" value="AAA_2"/>
    <property type="match status" value="1"/>
</dbReference>
<dbReference type="Pfam" id="PF10431">
    <property type="entry name" value="ClpB_D2-small"/>
    <property type="match status" value="1"/>
</dbReference>
<dbReference type="Pfam" id="PF06689">
    <property type="entry name" value="zf-C4_ClpX"/>
    <property type="match status" value="1"/>
</dbReference>
<dbReference type="SMART" id="SM00382">
    <property type="entry name" value="AAA"/>
    <property type="match status" value="1"/>
</dbReference>
<dbReference type="SMART" id="SM01086">
    <property type="entry name" value="ClpB_D2-small"/>
    <property type="match status" value="1"/>
</dbReference>
<dbReference type="SMART" id="SM00994">
    <property type="entry name" value="zf-C4_ClpX"/>
    <property type="match status" value="1"/>
</dbReference>
<dbReference type="SUPFAM" id="SSF57716">
    <property type="entry name" value="Glucocorticoid receptor-like (DNA-binding domain)"/>
    <property type="match status" value="1"/>
</dbReference>
<dbReference type="SUPFAM" id="SSF52540">
    <property type="entry name" value="P-loop containing nucleoside triphosphate hydrolases"/>
    <property type="match status" value="1"/>
</dbReference>
<dbReference type="PROSITE" id="PS51902">
    <property type="entry name" value="CLPX_ZB"/>
    <property type="match status" value="1"/>
</dbReference>
<keyword id="KW-0067">ATP-binding</keyword>
<keyword id="KW-0143">Chaperone</keyword>
<keyword id="KW-0479">Metal-binding</keyword>
<keyword id="KW-0547">Nucleotide-binding</keyword>
<keyword id="KW-0862">Zinc</keyword>
<name>CLPX_STRP4</name>
<sequence length="410" mass="45816">MSTNRKNDMMVYCSFCGKNQEEVQKIIAGNNAFICNECVELAQEIIREELVEEVLADLSEVPKPIELLHILNHYVIGQDRAKRALAVAVYNHYKRINFHDTREESEDVDLQKSNILMIGPTGSGKTFLAQTLAKSLNVPFAIADATALTEAGYVGEDVENILLKLLQVADFNIERAERGIIYVDEIDKIAKKSENVSITRDVSGEGVQQALLKIIEGTVASVPPQGGRKHPQQEMIQVDTKNILFIVGGAFDGIEEIVKQRMGEKVIGFGQNNKAIDENSSYMQEIIAEDIQKFGIIPELIGRLPVFAALEQLTVDDLVRILKEPRNALVKQYQTLLSYDDVELEFDDEALQEIANKAIERKTGARGLRSIIEETMLDVMFEVPSQENVKLVRITKETVDGTDKPILETA</sequence>
<reference key="1">
    <citation type="journal article" date="2001" name="Microb. Drug Resist.">
        <title>Annotated draft genomic sequence from a Streptococcus pneumoniae type 19F clinical isolate.</title>
        <authorList>
            <person name="Dopazo J."/>
            <person name="Mendoza A."/>
            <person name="Herrero J."/>
            <person name="Caldara F."/>
            <person name="Humbert Y."/>
            <person name="Friedli L."/>
            <person name="Guerrier M."/>
            <person name="Grand-Schenk E."/>
            <person name="Gandin C."/>
            <person name="de Francesco M."/>
            <person name="Polissi A."/>
            <person name="Buell G."/>
            <person name="Feger G."/>
            <person name="Garcia E."/>
            <person name="Peitsch M."/>
            <person name="Garcia-Bustos J.F."/>
        </authorList>
    </citation>
    <scope>NUCLEOTIDE SEQUENCE [LARGE SCALE GENOMIC DNA]</scope>
    <source>
        <strain>G54</strain>
    </source>
</reference>
<reference key="2">
    <citation type="submission" date="2008-03" db="EMBL/GenBank/DDBJ databases">
        <title>Pneumococcal beta glucoside metabolism investigated by whole genome comparison.</title>
        <authorList>
            <person name="Mulas L."/>
            <person name="Trappetti C."/>
            <person name="Hakenbeck R."/>
            <person name="Iannelli F."/>
            <person name="Pozzi G."/>
            <person name="Davidsen T.M."/>
            <person name="Tettelin H."/>
            <person name="Oggioni M."/>
        </authorList>
    </citation>
    <scope>NUCLEOTIDE SEQUENCE [LARGE SCALE GENOMIC DNA]</scope>
    <source>
        <strain>G54</strain>
    </source>
</reference>
<accession>B5E6L2</accession>
<evidence type="ECO:0000255" key="1">
    <source>
        <dbReference type="HAMAP-Rule" id="MF_00175"/>
    </source>
</evidence>
<evidence type="ECO:0000255" key="2">
    <source>
        <dbReference type="PROSITE-ProRule" id="PRU01250"/>
    </source>
</evidence>
<feature type="chain" id="PRO_1000098007" description="ATP-dependent Clp protease ATP-binding subunit ClpX">
    <location>
        <begin position="1"/>
        <end position="410"/>
    </location>
</feature>
<feature type="domain" description="ClpX-type ZB" evidence="2">
    <location>
        <begin position="1"/>
        <end position="54"/>
    </location>
</feature>
<feature type="binding site" evidence="2">
    <location>
        <position position="13"/>
    </location>
    <ligand>
        <name>Zn(2+)</name>
        <dbReference type="ChEBI" id="CHEBI:29105"/>
    </ligand>
</feature>
<feature type="binding site" evidence="2">
    <location>
        <position position="16"/>
    </location>
    <ligand>
        <name>Zn(2+)</name>
        <dbReference type="ChEBI" id="CHEBI:29105"/>
    </ligand>
</feature>
<feature type="binding site" evidence="2">
    <location>
        <position position="35"/>
    </location>
    <ligand>
        <name>Zn(2+)</name>
        <dbReference type="ChEBI" id="CHEBI:29105"/>
    </ligand>
</feature>
<feature type="binding site" evidence="2">
    <location>
        <position position="38"/>
    </location>
    <ligand>
        <name>Zn(2+)</name>
        <dbReference type="ChEBI" id="CHEBI:29105"/>
    </ligand>
</feature>
<feature type="binding site" evidence="1">
    <location>
        <begin position="120"/>
        <end position="127"/>
    </location>
    <ligand>
        <name>ATP</name>
        <dbReference type="ChEBI" id="CHEBI:30616"/>
    </ligand>
</feature>
<proteinExistence type="inferred from homology"/>
<protein>
    <recommendedName>
        <fullName evidence="1">ATP-dependent Clp protease ATP-binding subunit ClpX</fullName>
    </recommendedName>
</protein>
<comment type="function">
    <text evidence="1">ATP-dependent specificity component of the Clp protease. It directs the protease to specific substrates. Can perform chaperone functions in the absence of ClpP.</text>
</comment>
<comment type="subunit">
    <text evidence="1">Component of the ClpX-ClpP complex. Forms a hexameric ring that, in the presence of ATP, binds to fourteen ClpP subunits assembled into a disk-like structure with a central cavity, resembling the structure of eukaryotic proteasomes.</text>
</comment>
<comment type="similarity">
    <text evidence="1">Belongs to the ClpX chaperone family.</text>
</comment>
<gene>
    <name evidence="1" type="primary">clpX</name>
    <name type="ordered locus">SPG_1495</name>
</gene>